<feature type="chain" id="PRO_1000205081" description="Molybdenum cofactor guanylyltransferase">
    <location>
        <begin position="1"/>
        <end position="189"/>
    </location>
</feature>
<feature type="binding site" evidence="1">
    <location>
        <begin position="12"/>
        <end position="14"/>
    </location>
    <ligand>
        <name>GTP</name>
        <dbReference type="ChEBI" id="CHEBI:37565"/>
    </ligand>
</feature>
<feature type="binding site" evidence="1">
    <location>
        <position position="24"/>
    </location>
    <ligand>
        <name>GTP</name>
        <dbReference type="ChEBI" id="CHEBI:37565"/>
    </ligand>
</feature>
<feature type="binding site" evidence="1">
    <location>
        <position position="68"/>
    </location>
    <ligand>
        <name>GTP</name>
        <dbReference type="ChEBI" id="CHEBI:37565"/>
    </ligand>
</feature>
<feature type="binding site" evidence="1">
    <location>
        <position position="94"/>
    </location>
    <ligand>
        <name>GTP</name>
        <dbReference type="ChEBI" id="CHEBI:37565"/>
    </ligand>
</feature>
<feature type="binding site" evidence="1">
    <location>
        <position position="94"/>
    </location>
    <ligand>
        <name>Mg(2+)</name>
        <dbReference type="ChEBI" id="CHEBI:18420"/>
    </ligand>
</feature>
<name>MOBA_XANE5</name>
<reference key="1">
    <citation type="journal article" date="2005" name="J. Bacteriol.">
        <title>Insights into genome plasticity and pathogenicity of the plant pathogenic Bacterium Xanthomonas campestris pv. vesicatoria revealed by the complete genome sequence.</title>
        <authorList>
            <person name="Thieme F."/>
            <person name="Koebnik R."/>
            <person name="Bekel T."/>
            <person name="Berger C."/>
            <person name="Boch J."/>
            <person name="Buettner D."/>
            <person name="Caldana C."/>
            <person name="Gaigalat L."/>
            <person name="Goesmann A."/>
            <person name="Kay S."/>
            <person name="Kirchner O."/>
            <person name="Lanz C."/>
            <person name="Linke B."/>
            <person name="McHardy A.C."/>
            <person name="Meyer F."/>
            <person name="Mittenhuber G."/>
            <person name="Nies D.H."/>
            <person name="Niesbach-Kloesgen U."/>
            <person name="Patschkowski T."/>
            <person name="Rueckert C."/>
            <person name="Rupp O."/>
            <person name="Schneiker S."/>
            <person name="Schuster S.C."/>
            <person name="Vorhoelter F.J."/>
            <person name="Weber E."/>
            <person name="Puehler A."/>
            <person name="Bonas U."/>
            <person name="Bartels D."/>
            <person name="Kaiser O."/>
        </authorList>
    </citation>
    <scope>NUCLEOTIDE SEQUENCE [LARGE SCALE GENOMIC DNA]</scope>
    <source>
        <strain>85-10</strain>
    </source>
</reference>
<comment type="function">
    <text evidence="1">Transfers a GMP moiety from GTP to Mo-molybdopterin (Mo-MPT) cofactor (Moco or molybdenum cofactor) to form Mo-molybdopterin guanine dinucleotide (Mo-MGD) cofactor.</text>
</comment>
<comment type="catalytic activity">
    <reaction evidence="1">
        <text>Mo-molybdopterin + GTP + H(+) = Mo-molybdopterin guanine dinucleotide + diphosphate</text>
        <dbReference type="Rhea" id="RHEA:34243"/>
        <dbReference type="ChEBI" id="CHEBI:15378"/>
        <dbReference type="ChEBI" id="CHEBI:33019"/>
        <dbReference type="ChEBI" id="CHEBI:37565"/>
        <dbReference type="ChEBI" id="CHEBI:71302"/>
        <dbReference type="ChEBI" id="CHEBI:71310"/>
        <dbReference type="EC" id="2.7.7.77"/>
    </reaction>
</comment>
<comment type="cofactor">
    <cofactor evidence="1">
        <name>Mg(2+)</name>
        <dbReference type="ChEBI" id="CHEBI:18420"/>
    </cofactor>
</comment>
<comment type="subunit">
    <text evidence="1">Monomer.</text>
</comment>
<comment type="subcellular location">
    <subcellularLocation>
        <location evidence="1">Cytoplasm</location>
    </subcellularLocation>
</comment>
<comment type="domain">
    <text evidence="1">The N-terminal domain determines nucleotide recognition and specific binding, while the C-terminal domain determines the specific binding to the target protein.</text>
</comment>
<comment type="similarity">
    <text evidence="1">Belongs to the MobA family.</text>
</comment>
<organism>
    <name type="scientific">Xanthomonas euvesicatoria pv. vesicatoria (strain 85-10)</name>
    <name type="common">Xanthomonas campestris pv. vesicatoria</name>
    <dbReference type="NCBI Taxonomy" id="316273"/>
    <lineage>
        <taxon>Bacteria</taxon>
        <taxon>Pseudomonadati</taxon>
        <taxon>Pseudomonadota</taxon>
        <taxon>Gammaproteobacteria</taxon>
        <taxon>Lysobacterales</taxon>
        <taxon>Lysobacteraceae</taxon>
        <taxon>Xanthomonas</taxon>
    </lineage>
</organism>
<gene>
    <name evidence="1" type="primary">mobA</name>
    <name type="ordered locus">XCV2084</name>
</gene>
<dbReference type="EC" id="2.7.7.77" evidence="1"/>
<dbReference type="EMBL" id="AM039952">
    <property type="protein sequence ID" value="CAJ23761.1"/>
    <property type="molecule type" value="Genomic_DNA"/>
</dbReference>
<dbReference type="RefSeq" id="WP_011347323.1">
    <property type="nucleotide sequence ID" value="NZ_CP017190.1"/>
</dbReference>
<dbReference type="SMR" id="Q3BTU8"/>
<dbReference type="STRING" id="456327.BJD11_12005"/>
<dbReference type="KEGG" id="xcv:XCV2084"/>
<dbReference type="eggNOG" id="COG0746">
    <property type="taxonomic scope" value="Bacteria"/>
</dbReference>
<dbReference type="HOGENOM" id="CLU_055597_3_1_6"/>
<dbReference type="Proteomes" id="UP000007069">
    <property type="component" value="Chromosome"/>
</dbReference>
<dbReference type="GO" id="GO:0005737">
    <property type="term" value="C:cytoplasm"/>
    <property type="evidence" value="ECO:0007669"/>
    <property type="project" value="UniProtKB-SubCell"/>
</dbReference>
<dbReference type="GO" id="GO:0005525">
    <property type="term" value="F:GTP binding"/>
    <property type="evidence" value="ECO:0007669"/>
    <property type="project" value="UniProtKB-UniRule"/>
</dbReference>
<dbReference type="GO" id="GO:0046872">
    <property type="term" value="F:metal ion binding"/>
    <property type="evidence" value="ECO:0007669"/>
    <property type="project" value="UniProtKB-KW"/>
</dbReference>
<dbReference type="GO" id="GO:0061603">
    <property type="term" value="F:molybdenum cofactor guanylyltransferase activity"/>
    <property type="evidence" value="ECO:0007669"/>
    <property type="project" value="UniProtKB-EC"/>
</dbReference>
<dbReference type="GO" id="GO:1902758">
    <property type="term" value="P:bis(molybdopterin guanine dinucleotide)molybdenum biosynthetic process"/>
    <property type="evidence" value="ECO:0007669"/>
    <property type="project" value="TreeGrafter"/>
</dbReference>
<dbReference type="CDD" id="cd02503">
    <property type="entry name" value="MobA"/>
    <property type="match status" value="1"/>
</dbReference>
<dbReference type="Gene3D" id="3.90.550.10">
    <property type="entry name" value="Spore Coat Polysaccharide Biosynthesis Protein SpsA, Chain A"/>
    <property type="match status" value="1"/>
</dbReference>
<dbReference type="HAMAP" id="MF_00316">
    <property type="entry name" value="MobA"/>
    <property type="match status" value="1"/>
</dbReference>
<dbReference type="InterPro" id="IPR025877">
    <property type="entry name" value="MobA-like_NTP_Trfase"/>
</dbReference>
<dbReference type="InterPro" id="IPR013482">
    <property type="entry name" value="Molybde_CF_guanTrfase"/>
</dbReference>
<dbReference type="InterPro" id="IPR029044">
    <property type="entry name" value="Nucleotide-diphossugar_trans"/>
</dbReference>
<dbReference type="PANTHER" id="PTHR19136">
    <property type="entry name" value="MOLYBDENUM COFACTOR GUANYLYLTRANSFERASE"/>
    <property type="match status" value="1"/>
</dbReference>
<dbReference type="PANTHER" id="PTHR19136:SF81">
    <property type="entry name" value="MOLYBDENUM COFACTOR GUANYLYLTRANSFERASE"/>
    <property type="match status" value="1"/>
</dbReference>
<dbReference type="Pfam" id="PF12804">
    <property type="entry name" value="NTP_transf_3"/>
    <property type="match status" value="1"/>
</dbReference>
<dbReference type="SUPFAM" id="SSF53448">
    <property type="entry name" value="Nucleotide-diphospho-sugar transferases"/>
    <property type="match status" value="1"/>
</dbReference>
<sequence length="189" mass="20335">MTLQRPWTGVVLAGGRSSRMGQDKALLPWHGRPLLEQMQALLRQAGAQHVVVSGNRPEYAGIADVHPDLGPLGGLASVIANAADATTLVVVPVDMPLLSAALLGKLLAPSQHRCVAFEDQMLPMCLRLDASVREALTVLMAGAASSRSLRALQHSLQCHRVTVTASERAEFVNCNTPEQWSRLIHENPD</sequence>
<accession>Q3BTU8</accession>
<protein>
    <recommendedName>
        <fullName evidence="1">Molybdenum cofactor guanylyltransferase</fullName>
        <shortName evidence="1">MoCo guanylyltransferase</shortName>
        <ecNumber evidence="1">2.7.7.77</ecNumber>
    </recommendedName>
    <alternativeName>
        <fullName evidence="1">GTP:molybdopterin guanylyltransferase</fullName>
    </alternativeName>
    <alternativeName>
        <fullName evidence="1">Mo-MPT guanylyltransferase</fullName>
    </alternativeName>
    <alternativeName>
        <fullName evidence="1">Molybdopterin guanylyltransferase</fullName>
    </alternativeName>
    <alternativeName>
        <fullName evidence="1">Molybdopterin-guanine dinucleotide synthase</fullName>
        <shortName evidence="1">MGD synthase</shortName>
    </alternativeName>
</protein>
<evidence type="ECO:0000255" key="1">
    <source>
        <dbReference type="HAMAP-Rule" id="MF_00316"/>
    </source>
</evidence>
<proteinExistence type="inferred from homology"/>
<keyword id="KW-0963">Cytoplasm</keyword>
<keyword id="KW-0342">GTP-binding</keyword>
<keyword id="KW-0460">Magnesium</keyword>
<keyword id="KW-0479">Metal-binding</keyword>
<keyword id="KW-0501">Molybdenum cofactor biosynthesis</keyword>
<keyword id="KW-0547">Nucleotide-binding</keyword>
<keyword id="KW-0808">Transferase</keyword>